<proteinExistence type="inferred from homology"/>
<sequence>MNNIIDGKALANEILADLKLEIQGFKEKTQTSPKLAIVLVGDNPASMIYIKNKIKNAQQVGIDTLLVNLSTNIYTDDLISKINELNLDKEISGIIVQLPLPSSIDENKILSAVLPSKDSDGFHPLNVGYLHSGINQGFIPCTALGCLAVIKKYAPNLNGKDAVIVGRSNIVGKPLSALLLKENCSVTICHSKTCNLSSITSKADIVVVAIGSPLKLTAEYFNPESIVIDVGINRISNNKIIGDVDFENVKSKVKYITPVPGGIGPMTIAFLLKNTVKAFKNAIAL</sequence>
<name>FOLD_RICTY</name>
<dbReference type="EC" id="1.5.1.5" evidence="1"/>
<dbReference type="EC" id="3.5.4.9" evidence="1"/>
<dbReference type="EMBL" id="AE017197">
    <property type="protein sequence ID" value="AAU03973.1"/>
    <property type="molecule type" value="Genomic_DNA"/>
</dbReference>
<dbReference type="RefSeq" id="WP_011190954.1">
    <property type="nucleotide sequence ID" value="NC_006142.1"/>
</dbReference>
<dbReference type="SMR" id="Q68WL9"/>
<dbReference type="KEGG" id="rty:RT0501"/>
<dbReference type="eggNOG" id="COG0190">
    <property type="taxonomic scope" value="Bacteria"/>
</dbReference>
<dbReference type="HOGENOM" id="CLU_034045_2_0_5"/>
<dbReference type="OrthoDB" id="9803580at2"/>
<dbReference type="UniPathway" id="UPA00193"/>
<dbReference type="Proteomes" id="UP000000604">
    <property type="component" value="Chromosome"/>
</dbReference>
<dbReference type="GO" id="GO:0005829">
    <property type="term" value="C:cytosol"/>
    <property type="evidence" value="ECO:0007669"/>
    <property type="project" value="TreeGrafter"/>
</dbReference>
<dbReference type="GO" id="GO:0004477">
    <property type="term" value="F:methenyltetrahydrofolate cyclohydrolase activity"/>
    <property type="evidence" value="ECO:0007669"/>
    <property type="project" value="UniProtKB-UniRule"/>
</dbReference>
<dbReference type="GO" id="GO:0004488">
    <property type="term" value="F:methylenetetrahydrofolate dehydrogenase (NADP+) activity"/>
    <property type="evidence" value="ECO:0007669"/>
    <property type="project" value="UniProtKB-UniRule"/>
</dbReference>
<dbReference type="GO" id="GO:0000105">
    <property type="term" value="P:L-histidine biosynthetic process"/>
    <property type="evidence" value="ECO:0007669"/>
    <property type="project" value="UniProtKB-KW"/>
</dbReference>
<dbReference type="GO" id="GO:0009086">
    <property type="term" value="P:methionine biosynthetic process"/>
    <property type="evidence" value="ECO:0007669"/>
    <property type="project" value="UniProtKB-KW"/>
</dbReference>
<dbReference type="GO" id="GO:0006164">
    <property type="term" value="P:purine nucleotide biosynthetic process"/>
    <property type="evidence" value="ECO:0007669"/>
    <property type="project" value="UniProtKB-KW"/>
</dbReference>
<dbReference type="GO" id="GO:0035999">
    <property type="term" value="P:tetrahydrofolate interconversion"/>
    <property type="evidence" value="ECO:0007669"/>
    <property type="project" value="UniProtKB-UniRule"/>
</dbReference>
<dbReference type="CDD" id="cd01080">
    <property type="entry name" value="NAD_bind_m-THF_DH_Cyclohyd"/>
    <property type="match status" value="1"/>
</dbReference>
<dbReference type="FunFam" id="3.40.50.720:FF:000094">
    <property type="entry name" value="Bifunctional protein FolD"/>
    <property type="match status" value="1"/>
</dbReference>
<dbReference type="FunFam" id="3.40.50.10860:FF:000005">
    <property type="entry name" value="C-1-tetrahydrofolate synthase, cytoplasmic, putative"/>
    <property type="match status" value="1"/>
</dbReference>
<dbReference type="Gene3D" id="3.40.50.10860">
    <property type="entry name" value="Leucine Dehydrogenase, chain A, domain 1"/>
    <property type="match status" value="1"/>
</dbReference>
<dbReference type="Gene3D" id="3.40.50.720">
    <property type="entry name" value="NAD(P)-binding Rossmann-like Domain"/>
    <property type="match status" value="1"/>
</dbReference>
<dbReference type="HAMAP" id="MF_01576">
    <property type="entry name" value="THF_DHG_CYH"/>
    <property type="match status" value="1"/>
</dbReference>
<dbReference type="InterPro" id="IPR046346">
    <property type="entry name" value="Aminoacid_DH-like_N_sf"/>
</dbReference>
<dbReference type="InterPro" id="IPR036291">
    <property type="entry name" value="NAD(P)-bd_dom_sf"/>
</dbReference>
<dbReference type="InterPro" id="IPR000672">
    <property type="entry name" value="THF_DH/CycHdrlase"/>
</dbReference>
<dbReference type="InterPro" id="IPR020630">
    <property type="entry name" value="THF_DH/CycHdrlase_cat_dom"/>
</dbReference>
<dbReference type="InterPro" id="IPR020867">
    <property type="entry name" value="THF_DH/CycHdrlase_CS"/>
</dbReference>
<dbReference type="InterPro" id="IPR020631">
    <property type="entry name" value="THF_DH/CycHdrlase_NAD-bd_dom"/>
</dbReference>
<dbReference type="NCBIfam" id="NF010768">
    <property type="entry name" value="PRK14171.1"/>
    <property type="match status" value="1"/>
</dbReference>
<dbReference type="PANTHER" id="PTHR48099:SF5">
    <property type="entry name" value="C-1-TETRAHYDROFOLATE SYNTHASE, CYTOPLASMIC"/>
    <property type="match status" value="1"/>
</dbReference>
<dbReference type="PANTHER" id="PTHR48099">
    <property type="entry name" value="C-1-TETRAHYDROFOLATE SYNTHASE, CYTOPLASMIC-RELATED"/>
    <property type="match status" value="1"/>
</dbReference>
<dbReference type="Pfam" id="PF00763">
    <property type="entry name" value="THF_DHG_CYH"/>
    <property type="match status" value="1"/>
</dbReference>
<dbReference type="Pfam" id="PF02882">
    <property type="entry name" value="THF_DHG_CYH_C"/>
    <property type="match status" value="1"/>
</dbReference>
<dbReference type="PRINTS" id="PR00085">
    <property type="entry name" value="THFDHDRGNASE"/>
</dbReference>
<dbReference type="SUPFAM" id="SSF53223">
    <property type="entry name" value="Aminoacid dehydrogenase-like, N-terminal domain"/>
    <property type="match status" value="1"/>
</dbReference>
<dbReference type="SUPFAM" id="SSF51735">
    <property type="entry name" value="NAD(P)-binding Rossmann-fold domains"/>
    <property type="match status" value="1"/>
</dbReference>
<dbReference type="PROSITE" id="PS00766">
    <property type="entry name" value="THF_DHG_CYH_1"/>
    <property type="match status" value="1"/>
</dbReference>
<dbReference type="PROSITE" id="PS00767">
    <property type="entry name" value="THF_DHG_CYH_2"/>
    <property type="match status" value="1"/>
</dbReference>
<evidence type="ECO:0000255" key="1">
    <source>
        <dbReference type="HAMAP-Rule" id="MF_01576"/>
    </source>
</evidence>
<accession>Q68WL9</accession>
<protein>
    <recommendedName>
        <fullName evidence="1">Bifunctional protein FolD</fullName>
    </recommendedName>
    <domain>
        <recommendedName>
            <fullName evidence="1">Methylenetetrahydrofolate dehydrogenase</fullName>
            <ecNumber evidence="1">1.5.1.5</ecNumber>
        </recommendedName>
    </domain>
    <domain>
        <recommendedName>
            <fullName evidence="1">Methenyltetrahydrofolate cyclohydrolase</fullName>
            <ecNumber evidence="1">3.5.4.9</ecNumber>
        </recommendedName>
    </domain>
</protein>
<organism>
    <name type="scientific">Rickettsia typhi (strain ATCC VR-144 / Wilmington)</name>
    <dbReference type="NCBI Taxonomy" id="257363"/>
    <lineage>
        <taxon>Bacteria</taxon>
        <taxon>Pseudomonadati</taxon>
        <taxon>Pseudomonadota</taxon>
        <taxon>Alphaproteobacteria</taxon>
        <taxon>Rickettsiales</taxon>
        <taxon>Rickettsiaceae</taxon>
        <taxon>Rickettsieae</taxon>
        <taxon>Rickettsia</taxon>
        <taxon>typhus group</taxon>
    </lineage>
</organism>
<gene>
    <name evidence="1" type="primary">folD</name>
    <name type="ordered locus">RT0501</name>
</gene>
<reference key="1">
    <citation type="journal article" date="2004" name="J. Bacteriol.">
        <title>Complete genome sequence of Rickettsia typhi and comparison with sequences of other Rickettsiae.</title>
        <authorList>
            <person name="McLeod M.P."/>
            <person name="Qin X."/>
            <person name="Karpathy S.E."/>
            <person name="Gioia J."/>
            <person name="Highlander S.K."/>
            <person name="Fox G.E."/>
            <person name="McNeill T.Z."/>
            <person name="Jiang H."/>
            <person name="Muzny D."/>
            <person name="Jacob L.S."/>
            <person name="Hawes A.C."/>
            <person name="Sodergren E."/>
            <person name="Gill R."/>
            <person name="Hume J."/>
            <person name="Morgan M."/>
            <person name="Fan G."/>
            <person name="Amin A.G."/>
            <person name="Gibbs R.A."/>
            <person name="Hong C."/>
            <person name="Yu X.-J."/>
            <person name="Walker D.H."/>
            <person name="Weinstock G.M."/>
        </authorList>
    </citation>
    <scope>NUCLEOTIDE SEQUENCE [LARGE SCALE GENOMIC DNA]</scope>
    <source>
        <strain>ATCC VR-144 / Wilmington</strain>
    </source>
</reference>
<comment type="function">
    <text evidence="1">Catalyzes the oxidation of 5,10-methylenetetrahydrofolate to 5,10-methenyltetrahydrofolate and then the hydrolysis of 5,10-methenyltetrahydrofolate to 10-formyltetrahydrofolate.</text>
</comment>
<comment type="catalytic activity">
    <reaction evidence="1">
        <text>(6R)-5,10-methylene-5,6,7,8-tetrahydrofolate + NADP(+) = (6R)-5,10-methenyltetrahydrofolate + NADPH</text>
        <dbReference type="Rhea" id="RHEA:22812"/>
        <dbReference type="ChEBI" id="CHEBI:15636"/>
        <dbReference type="ChEBI" id="CHEBI:57455"/>
        <dbReference type="ChEBI" id="CHEBI:57783"/>
        <dbReference type="ChEBI" id="CHEBI:58349"/>
        <dbReference type="EC" id="1.5.1.5"/>
    </reaction>
</comment>
<comment type="catalytic activity">
    <reaction evidence="1">
        <text>(6R)-5,10-methenyltetrahydrofolate + H2O = (6R)-10-formyltetrahydrofolate + H(+)</text>
        <dbReference type="Rhea" id="RHEA:23700"/>
        <dbReference type="ChEBI" id="CHEBI:15377"/>
        <dbReference type="ChEBI" id="CHEBI:15378"/>
        <dbReference type="ChEBI" id="CHEBI:57455"/>
        <dbReference type="ChEBI" id="CHEBI:195366"/>
        <dbReference type="EC" id="3.5.4.9"/>
    </reaction>
</comment>
<comment type="pathway">
    <text evidence="1">One-carbon metabolism; tetrahydrofolate interconversion.</text>
</comment>
<comment type="subunit">
    <text evidence="1">Homodimer.</text>
</comment>
<comment type="similarity">
    <text evidence="1">Belongs to the tetrahydrofolate dehydrogenase/cyclohydrolase family.</text>
</comment>
<feature type="chain" id="PRO_0000268481" description="Bifunctional protein FolD">
    <location>
        <begin position="1"/>
        <end position="285"/>
    </location>
</feature>
<feature type="binding site" evidence="1">
    <location>
        <begin position="166"/>
        <end position="168"/>
    </location>
    <ligand>
        <name>NADP(+)</name>
        <dbReference type="ChEBI" id="CHEBI:58349"/>
    </ligand>
</feature>
<feature type="binding site" evidence="1">
    <location>
        <position position="191"/>
    </location>
    <ligand>
        <name>NADP(+)</name>
        <dbReference type="ChEBI" id="CHEBI:58349"/>
    </ligand>
</feature>
<feature type="binding site" evidence="1">
    <location>
        <position position="232"/>
    </location>
    <ligand>
        <name>NADP(+)</name>
        <dbReference type="ChEBI" id="CHEBI:58349"/>
    </ligand>
</feature>
<keyword id="KW-0028">Amino-acid biosynthesis</keyword>
<keyword id="KW-0368">Histidine biosynthesis</keyword>
<keyword id="KW-0378">Hydrolase</keyword>
<keyword id="KW-0486">Methionine biosynthesis</keyword>
<keyword id="KW-0511">Multifunctional enzyme</keyword>
<keyword id="KW-0521">NADP</keyword>
<keyword id="KW-0554">One-carbon metabolism</keyword>
<keyword id="KW-0560">Oxidoreductase</keyword>
<keyword id="KW-0658">Purine biosynthesis</keyword>